<organism>
    <name type="scientific">Rhodococcus opacus (strain B4)</name>
    <dbReference type="NCBI Taxonomy" id="632772"/>
    <lineage>
        <taxon>Bacteria</taxon>
        <taxon>Bacillati</taxon>
        <taxon>Actinomycetota</taxon>
        <taxon>Actinomycetes</taxon>
        <taxon>Mycobacteriales</taxon>
        <taxon>Nocardiaceae</taxon>
        <taxon>Rhodococcus</taxon>
    </lineage>
</organism>
<comment type="subcellular location">
    <subcellularLocation>
        <location evidence="1">Cytoplasm</location>
    </subcellularLocation>
</comment>
<comment type="similarity">
    <text evidence="1">Belongs to the TACO1 family.</text>
</comment>
<reference key="1">
    <citation type="submission" date="2009-03" db="EMBL/GenBank/DDBJ databases">
        <title>Comparison of the complete genome sequences of Rhodococcus erythropolis PR4 and Rhodococcus opacus B4.</title>
        <authorList>
            <person name="Takarada H."/>
            <person name="Sekine M."/>
            <person name="Hosoyama A."/>
            <person name="Yamada R."/>
            <person name="Fujisawa T."/>
            <person name="Omata S."/>
            <person name="Shimizu A."/>
            <person name="Tsukatani N."/>
            <person name="Tanikawa S."/>
            <person name="Fujita N."/>
            <person name="Harayama S."/>
        </authorList>
    </citation>
    <scope>NUCLEOTIDE SEQUENCE [LARGE SCALE GENOMIC DNA]</scope>
    <source>
        <strain>B4</strain>
    </source>
</reference>
<protein>
    <recommendedName>
        <fullName evidence="1">Probable transcriptional regulatory protein ROP_68700</fullName>
    </recommendedName>
</protein>
<feature type="chain" id="PRO_1000200108" description="Probable transcriptional regulatory protein ROP_68700">
    <location>
        <begin position="1"/>
        <end position="250"/>
    </location>
</feature>
<dbReference type="EMBL" id="AP011115">
    <property type="protein sequence ID" value="BAH55117.1"/>
    <property type="molecule type" value="Genomic_DNA"/>
</dbReference>
<dbReference type="RefSeq" id="WP_015890547.1">
    <property type="nucleotide sequence ID" value="NC_012522.1"/>
</dbReference>
<dbReference type="SMR" id="C1B4C8"/>
<dbReference type="STRING" id="632772.ROP_68700"/>
<dbReference type="KEGG" id="rop:ROP_68700"/>
<dbReference type="PATRIC" id="fig|632772.20.peg.7160"/>
<dbReference type="HOGENOM" id="CLU_062974_2_2_11"/>
<dbReference type="OrthoDB" id="9781053at2"/>
<dbReference type="Proteomes" id="UP000002212">
    <property type="component" value="Chromosome"/>
</dbReference>
<dbReference type="GO" id="GO:0005829">
    <property type="term" value="C:cytosol"/>
    <property type="evidence" value="ECO:0007669"/>
    <property type="project" value="TreeGrafter"/>
</dbReference>
<dbReference type="GO" id="GO:0003677">
    <property type="term" value="F:DNA binding"/>
    <property type="evidence" value="ECO:0007669"/>
    <property type="project" value="UniProtKB-UniRule"/>
</dbReference>
<dbReference type="GO" id="GO:0006355">
    <property type="term" value="P:regulation of DNA-templated transcription"/>
    <property type="evidence" value="ECO:0007669"/>
    <property type="project" value="UniProtKB-UniRule"/>
</dbReference>
<dbReference type="FunFam" id="1.10.10.200:FF:000002">
    <property type="entry name" value="Probable transcriptional regulatory protein CLM62_37755"/>
    <property type="match status" value="1"/>
</dbReference>
<dbReference type="FunFam" id="3.30.70.980:FF:000006">
    <property type="entry name" value="Probable transcriptional regulatory protein J113_18170"/>
    <property type="match status" value="1"/>
</dbReference>
<dbReference type="Gene3D" id="1.10.10.200">
    <property type="match status" value="1"/>
</dbReference>
<dbReference type="Gene3D" id="3.30.70.980">
    <property type="match status" value="2"/>
</dbReference>
<dbReference type="HAMAP" id="MF_00693">
    <property type="entry name" value="Transcrip_reg_TACO1"/>
    <property type="match status" value="1"/>
</dbReference>
<dbReference type="InterPro" id="IPR017856">
    <property type="entry name" value="Integrase-like_N"/>
</dbReference>
<dbReference type="InterPro" id="IPR048300">
    <property type="entry name" value="TACO1_YebC-like_2nd/3rd_dom"/>
</dbReference>
<dbReference type="InterPro" id="IPR049083">
    <property type="entry name" value="TACO1_YebC_N"/>
</dbReference>
<dbReference type="InterPro" id="IPR002876">
    <property type="entry name" value="Transcrip_reg_TACO1-like"/>
</dbReference>
<dbReference type="InterPro" id="IPR026564">
    <property type="entry name" value="Transcrip_reg_TACO1-like_dom3"/>
</dbReference>
<dbReference type="InterPro" id="IPR029072">
    <property type="entry name" value="YebC-like"/>
</dbReference>
<dbReference type="NCBIfam" id="NF001030">
    <property type="entry name" value="PRK00110.1"/>
    <property type="match status" value="1"/>
</dbReference>
<dbReference type="NCBIfam" id="NF009044">
    <property type="entry name" value="PRK12378.1"/>
    <property type="match status" value="1"/>
</dbReference>
<dbReference type="NCBIfam" id="TIGR01033">
    <property type="entry name" value="YebC/PmpR family DNA-binding transcriptional regulator"/>
    <property type="match status" value="1"/>
</dbReference>
<dbReference type="PANTHER" id="PTHR12532:SF6">
    <property type="entry name" value="TRANSCRIPTIONAL REGULATORY PROTEIN YEBC-RELATED"/>
    <property type="match status" value="1"/>
</dbReference>
<dbReference type="PANTHER" id="PTHR12532">
    <property type="entry name" value="TRANSLATIONAL ACTIVATOR OF CYTOCHROME C OXIDASE 1"/>
    <property type="match status" value="1"/>
</dbReference>
<dbReference type="Pfam" id="PF20772">
    <property type="entry name" value="TACO1_YebC_N"/>
    <property type="match status" value="1"/>
</dbReference>
<dbReference type="Pfam" id="PF01709">
    <property type="entry name" value="Transcrip_reg"/>
    <property type="match status" value="1"/>
</dbReference>
<dbReference type="SUPFAM" id="SSF75625">
    <property type="entry name" value="YebC-like"/>
    <property type="match status" value="1"/>
</dbReference>
<name>Y6870_RHOOB</name>
<proteinExistence type="inferred from homology"/>
<evidence type="ECO:0000255" key="1">
    <source>
        <dbReference type="HAMAP-Rule" id="MF_00693"/>
    </source>
</evidence>
<gene>
    <name type="ordered locus">ROP_68700</name>
</gene>
<sequence length="250" mass="26755">MSGHSKWATTKHKKAVIDAKRGKAFAKLIKNIEVAARTGGGDPAGNPTLYDAIQKAKKTSVPNDNIERARKRGAGEEAGGADWQTIMYEGYGPNGVAVLIECLTDNRNRAAGEVRTAMTRNGGNMADPGSVSYLFTRKGVVTLEKGDQTEDDVLMAVLDAGAEEVTDLGETFEIVSEPTDLVAVRSALQEAGIDYDSAEADFRASVEVPVDADGARKVFKLVDALEESDDVQNVYTNVDLSDEVLAELDD</sequence>
<keyword id="KW-0963">Cytoplasm</keyword>
<keyword id="KW-0238">DNA-binding</keyword>
<keyword id="KW-0804">Transcription</keyword>
<keyword id="KW-0805">Transcription regulation</keyword>
<accession>C1B4C8</accession>